<comment type="function">
    <text evidence="1">Catalyzes the oxidation of 5,10-methylenetetrahydrofolate to 5,10-methenyltetrahydrofolate and then the hydrolysis of 5,10-methenyltetrahydrofolate to 10-formyltetrahydrofolate.</text>
</comment>
<comment type="catalytic activity">
    <reaction evidence="1">
        <text>(6R)-5,10-methylene-5,6,7,8-tetrahydrofolate + NADP(+) = (6R)-5,10-methenyltetrahydrofolate + NADPH</text>
        <dbReference type="Rhea" id="RHEA:22812"/>
        <dbReference type="ChEBI" id="CHEBI:15636"/>
        <dbReference type="ChEBI" id="CHEBI:57455"/>
        <dbReference type="ChEBI" id="CHEBI:57783"/>
        <dbReference type="ChEBI" id="CHEBI:58349"/>
        <dbReference type="EC" id="1.5.1.5"/>
    </reaction>
</comment>
<comment type="catalytic activity">
    <reaction evidence="1">
        <text>(6R)-5,10-methenyltetrahydrofolate + H2O = (6R)-10-formyltetrahydrofolate + H(+)</text>
        <dbReference type="Rhea" id="RHEA:23700"/>
        <dbReference type="ChEBI" id="CHEBI:15377"/>
        <dbReference type="ChEBI" id="CHEBI:15378"/>
        <dbReference type="ChEBI" id="CHEBI:57455"/>
        <dbReference type="ChEBI" id="CHEBI:195366"/>
        <dbReference type="EC" id="3.5.4.9"/>
    </reaction>
</comment>
<comment type="pathway">
    <text evidence="1">One-carbon metabolism; tetrahydrofolate interconversion.</text>
</comment>
<comment type="subunit">
    <text evidence="1">Homodimer.</text>
</comment>
<comment type="similarity">
    <text evidence="1">Belongs to the tetrahydrofolate dehydrogenase/cyclohydrolase family.</text>
</comment>
<reference key="1">
    <citation type="submission" date="2006-05" db="EMBL/GenBank/DDBJ databases">
        <title>Complete sequence of chromosome 3 of Burkholderia cenocepacia AU 1054.</title>
        <authorList>
            <consortium name="US DOE Joint Genome Institute"/>
            <person name="Copeland A."/>
            <person name="Lucas S."/>
            <person name="Lapidus A."/>
            <person name="Barry K."/>
            <person name="Detter J.C."/>
            <person name="Glavina del Rio T."/>
            <person name="Hammon N."/>
            <person name="Israni S."/>
            <person name="Dalin E."/>
            <person name="Tice H."/>
            <person name="Pitluck S."/>
            <person name="Chain P."/>
            <person name="Malfatti S."/>
            <person name="Shin M."/>
            <person name="Vergez L."/>
            <person name="Schmutz J."/>
            <person name="Larimer F."/>
            <person name="Land M."/>
            <person name="Hauser L."/>
            <person name="Kyrpides N."/>
            <person name="Lykidis A."/>
            <person name="LiPuma J.J."/>
            <person name="Konstantinidis K."/>
            <person name="Tiedje J.M."/>
            <person name="Richardson P."/>
        </authorList>
    </citation>
    <scope>NUCLEOTIDE SEQUENCE [LARGE SCALE GENOMIC DNA]</scope>
    <source>
        <strain>AU 1054</strain>
    </source>
</reference>
<sequence>MTALLIDGNALSKTLRAQAAERAAALTARGHQPGLAVILVGANPASEVYVRNKIKACEDNGFFSLKDAYPATLSEADLLARIDELNRDPKIHGILVQLPLPAHIDSHKVIEAIAPEKDVDGFHVANAGALMTGKPLFRPCTPYGVMKMFEAHGIALQGANAVVIGRSNIVGKPMAMMLLDAGATVTICHSKTRDLAAHTREADIVVAAVGKRNILTADMVKPGATVIDVGMNRDDAGKLCGDVDFAGAKEVAGYITPVPGGVGPMTITMLLINTIESAERAAAAA</sequence>
<name>FOLD_BURO1</name>
<gene>
    <name evidence="1" type="primary">folD</name>
    <name type="ordered locus">Bcen_5937</name>
</gene>
<keyword id="KW-0028">Amino-acid biosynthesis</keyword>
<keyword id="KW-0368">Histidine biosynthesis</keyword>
<keyword id="KW-0378">Hydrolase</keyword>
<keyword id="KW-0486">Methionine biosynthesis</keyword>
<keyword id="KW-0511">Multifunctional enzyme</keyword>
<keyword id="KW-0521">NADP</keyword>
<keyword id="KW-0554">One-carbon metabolism</keyword>
<keyword id="KW-0560">Oxidoreductase</keyword>
<keyword id="KW-0658">Purine biosynthesis</keyword>
<organism>
    <name type="scientific">Burkholderia orbicola (strain AU 1054)</name>
    <dbReference type="NCBI Taxonomy" id="331271"/>
    <lineage>
        <taxon>Bacteria</taxon>
        <taxon>Pseudomonadati</taxon>
        <taxon>Pseudomonadota</taxon>
        <taxon>Betaproteobacteria</taxon>
        <taxon>Burkholderiales</taxon>
        <taxon>Burkholderiaceae</taxon>
        <taxon>Burkholderia</taxon>
        <taxon>Burkholderia cepacia complex</taxon>
        <taxon>Burkholderia orbicola</taxon>
    </lineage>
</organism>
<feature type="chain" id="PRO_0000268297" description="Bifunctional protein FolD">
    <location>
        <begin position="1"/>
        <end position="285"/>
    </location>
</feature>
<feature type="binding site" evidence="1">
    <location>
        <begin position="165"/>
        <end position="167"/>
    </location>
    <ligand>
        <name>NADP(+)</name>
        <dbReference type="ChEBI" id="CHEBI:58349"/>
    </ligand>
</feature>
<feature type="binding site" evidence="1">
    <location>
        <position position="190"/>
    </location>
    <ligand>
        <name>NADP(+)</name>
        <dbReference type="ChEBI" id="CHEBI:58349"/>
    </ligand>
</feature>
<evidence type="ECO:0000255" key="1">
    <source>
        <dbReference type="HAMAP-Rule" id="MF_01576"/>
    </source>
</evidence>
<protein>
    <recommendedName>
        <fullName evidence="1">Bifunctional protein FolD</fullName>
    </recommendedName>
    <domain>
        <recommendedName>
            <fullName evidence="1">Methylenetetrahydrofolate dehydrogenase</fullName>
            <ecNumber evidence="1">1.5.1.5</ecNumber>
        </recommendedName>
    </domain>
    <domain>
        <recommendedName>
            <fullName evidence="1">Methenyltetrahydrofolate cyclohydrolase</fullName>
            <ecNumber evidence="1">3.5.4.9</ecNumber>
        </recommendedName>
    </domain>
</protein>
<dbReference type="EC" id="1.5.1.5" evidence="1"/>
<dbReference type="EC" id="3.5.4.9" evidence="1"/>
<dbReference type="EMBL" id="CP000380">
    <property type="protein sequence ID" value="ABF80802.1"/>
    <property type="molecule type" value="Genomic_DNA"/>
</dbReference>
<dbReference type="SMR" id="Q1BHV3"/>
<dbReference type="HOGENOM" id="CLU_034045_2_1_4"/>
<dbReference type="UniPathway" id="UPA00193"/>
<dbReference type="GO" id="GO:0005829">
    <property type="term" value="C:cytosol"/>
    <property type="evidence" value="ECO:0007669"/>
    <property type="project" value="TreeGrafter"/>
</dbReference>
<dbReference type="GO" id="GO:0004477">
    <property type="term" value="F:methenyltetrahydrofolate cyclohydrolase activity"/>
    <property type="evidence" value="ECO:0007669"/>
    <property type="project" value="UniProtKB-UniRule"/>
</dbReference>
<dbReference type="GO" id="GO:0004488">
    <property type="term" value="F:methylenetetrahydrofolate dehydrogenase (NADP+) activity"/>
    <property type="evidence" value="ECO:0007669"/>
    <property type="project" value="UniProtKB-UniRule"/>
</dbReference>
<dbReference type="GO" id="GO:0000105">
    <property type="term" value="P:L-histidine biosynthetic process"/>
    <property type="evidence" value="ECO:0007669"/>
    <property type="project" value="UniProtKB-KW"/>
</dbReference>
<dbReference type="GO" id="GO:0009086">
    <property type="term" value="P:methionine biosynthetic process"/>
    <property type="evidence" value="ECO:0007669"/>
    <property type="project" value="UniProtKB-KW"/>
</dbReference>
<dbReference type="GO" id="GO:0006164">
    <property type="term" value="P:purine nucleotide biosynthetic process"/>
    <property type="evidence" value="ECO:0007669"/>
    <property type="project" value="UniProtKB-KW"/>
</dbReference>
<dbReference type="GO" id="GO:0035999">
    <property type="term" value="P:tetrahydrofolate interconversion"/>
    <property type="evidence" value="ECO:0007669"/>
    <property type="project" value="UniProtKB-UniRule"/>
</dbReference>
<dbReference type="CDD" id="cd01080">
    <property type="entry name" value="NAD_bind_m-THF_DH_Cyclohyd"/>
    <property type="match status" value="1"/>
</dbReference>
<dbReference type="FunFam" id="3.40.50.720:FF:000094">
    <property type="entry name" value="Bifunctional protein FolD"/>
    <property type="match status" value="1"/>
</dbReference>
<dbReference type="FunFam" id="3.40.50.10860:FF:000005">
    <property type="entry name" value="C-1-tetrahydrofolate synthase, cytoplasmic, putative"/>
    <property type="match status" value="1"/>
</dbReference>
<dbReference type="Gene3D" id="3.40.50.10860">
    <property type="entry name" value="Leucine Dehydrogenase, chain A, domain 1"/>
    <property type="match status" value="1"/>
</dbReference>
<dbReference type="Gene3D" id="3.40.50.720">
    <property type="entry name" value="NAD(P)-binding Rossmann-like Domain"/>
    <property type="match status" value="1"/>
</dbReference>
<dbReference type="HAMAP" id="MF_01576">
    <property type="entry name" value="THF_DHG_CYH"/>
    <property type="match status" value="1"/>
</dbReference>
<dbReference type="InterPro" id="IPR046346">
    <property type="entry name" value="Aminoacid_DH-like_N_sf"/>
</dbReference>
<dbReference type="InterPro" id="IPR036291">
    <property type="entry name" value="NAD(P)-bd_dom_sf"/>
</dbReference>
<dbReference type="InterPro" id="IPR000672">
    <property type="entry name" value="THF_DH/CycHdrlase"/>
</dbReference>
<dbReference type="InterPro" id="IPR020630">
    <property type="entry name" value="THF_DH/CycHdrlase_cat_dom"/>
</dbReference>
<dbReference type="InterPro" id="IPR020867">
    <property type="entry name" value="THF_DH/CycHdrlase_CS"/>
</dbReference>
<dbReference type="InterPro" id="IPR020631">
    <property type="entry name" value="THF_DH/CycHdrlase_NAD-bd_dom"/>
</dbReference>
<dbReference type="NCBIfam" id="NF008058">
    <property type="entry name" value="PRK10792.1"/>
    <property type="match status" value="1"/>
</dbReference>
<dbReference type="NCBIfam" id="NF010783">
    <property type="entry name" value="PRK14186.1"/>
    <property type="match status" value="1"/>
</dbReference>
<dbReference type="NCBIfam" id="NF010786">
    <property type="entry name" value="PRK14189.1"/>
    <property type="match status" value="1"/>
</dbReference>
<dbReference type="PANTHER" id="PTHR48099:SF5">
    <property type="entry name" value="C-1-TETRAHYDROFOLATE SYNTHASE, CYTOPLASMIC"/>
    <property type="match status" value="1"/>
</dbReference>
<dbReference type="PANTHER" id="PTHR48099">
    <property type="entry name" value="C-1-TETRAHYDROFOLATE SYNTHASE, CYTOPLASMIC-RELATED"/>
    <property type="match status" value="1"/>
</dbReference>
<dbReference type="Pfam" id="PF00763">
    <property type="entry name" value="THF_DHG_CYH"/>
    <property type="match status" value="1"/>
</dbReference>
<dbReference type="Pfam" id="PF02882">
    <property type="entry name" value="THF_DHG_CYH_C"/>
    <property type="match status" value="1"/>
</dbReference>
<dbReference type="PRINTS" id="PR00085">
    <property type="entry name" value="THFDHDRGNASE"/>
</dbReference>
<dbReference type="SUPFAM" id="SSF53223">
    <property type="entry name" value="Aminoacid dehydrogenase-like, N-terminal domain"/>
    <property type="match status" value="1"/>
</dbReference>
<dbReference type="SUPFAM" id="SSF51735">
    <property type="entry name" value="NAD(P)-binding Rossmann-fold domains"/>
    <property type="match status" value="1"/>
</dbReference>
<dbReference type="PROSITE" id="PS00766">
    <property type="entry name" value="THF_DHG_CYH_1"/>
    <property type="match status" value="1"/>
</dbReference>
<dbReference type="PROSITE" id="PS00767">
    <property type="entry name" value="THF_DHG_CYH_2"/>
    <property type="match status" value="1"/>
</dbReference>
<proteinExistence type="inferred from homology"/>
<accession>Q1BHV3</accession>